<sequence length="1131" mass="125150">MSSSRPAHSSSSSSRTRQSSRARILAQTTLDAELNAEYEESGDSFDYSKLVEAQRSTPPEQQGRSGKVIAYLQHIQRGKLIQPFGCLLALDEKSFRVIAFSENAPEMLTTVSHAVPNVDDPPKLGIGTNVRSLFTDPGATALQKALGFADVSLLNPILVQCKTSGKPFYAIVHRATGCLVVDFEPVKPTEFPATAAGALQSYKLAAKAISKIQSLPGGSMEALCNTVVKEVFDLTGYDRVMAYKFHEDEHGEVFAEITKPGIEPYIGLHYPATDIPQAARFLFMKNKVRMICDCRARSVKIIEDEALSIDISLCGSTLRAPHSCHLKYMENMNSIASLVMAVVVNENEEDDEPEPEQPPQQQKKKRLWGLIVCHHESPRYVPFPLRYACEFLAQVFAVHVNKEFELEKQIREKNILRMQTMLSDMLFKESSPLSIVSGSPNIMDLVKCDGAALLYGDKVWRLQTAPTESQIRDIAFWLSEVHGDSTGLSTDSLQDAGYPGAASLGDMICGMAVAKITSKDILFWFRSHTAAEIKWGGAKHDPSDKDDNRRMHPRLSFKAFLEVVKTKSLPWSDYEMDAIHSLQLILRGTLNDASKPAQASGLDNQIGDLKLDGLAELQAVTSEMVRLMETATVPILAVDGNGLVNGWNQKVAELSGLRVDEAIGRHILTLVEDSSVSLVQRMLYLALQGREEKEVRFELKTHGSKRDDGPVILVVNACASRDLHDHVVGVCFVAQDMTVHKLVMDKFTRVEGDYKAIIHNPNPLIPPIFGADQFGWCSEWNAAMTKLTGWHRDEVVDKMLLGEVFNSSNASCLLKSKDAFVRLCIVINSALAGEEAEKASFGFFDRNEKYVECLLSVNRKVNADGVVTGVFCFIHVPSDDLQHALHVQQASEQTAQRKLKAFSYMRHAINKPLSGMLYSRETLKSTGLNEEQMRQVRVGDNCHRQLNKILADLDQDNITDKSSCLDLDMAEFVLQDVVVSAVSQVLIGCQAKGIRVACNLPERSMKQKVYGDGIRLQQIVSDFLFVSVKFSPAGGSVDISSKLTKNSIGENLHLIDFELRIKHRGAGVPAEILSQMYEEDNKEQSEEGFSLAVSRNLLRLMNGDIRHLREAGMSTFILTAELAAAPSAVGR</sequence>
<feature type="chain" id="PRO_0000171975" description="Phytochrome A">
    <location>
        <begin position="1"/>
        <end position="1131"/>
    </location>
</feature>
<feature type="domain" description="GAF">
    <location>
        <begin position="219"/>
        <end position="404"/>
    </location>
</feature>
<feature type="domain" description="PAS 1" evidence="3">
    <location>
        <begin position="620"/>
        <end position="690"/>
    </location>
</feature>
<feature type="domain" description="PAS 2" evidence="3">
    <location>
        <begin position="750"/>
        <end position="834"/>
    </location>
</feature>
<feature type="domain" description="Histidine kinase" evidence="2">
    <location>
        <begin position="904"/>
        <end position="1124"/>
    </location>
</feature>
<feature type="region of interest" description="Disordered" evidence="4">
    <location>
        <begin position="1"/>
        <end position="23"/>
    </location>
</feature>
<feature type="binding site" description="covalent" evidence="1">
    <location>
        <position position="324"/>
    </location>
    <ligand>
        <name>phytochromobilin</name>
        <dbReference type="ChEBI" id="CHEBI:189064"/>
    </ligand>
</feature>
<comment type="function">
    <text>Regulatory photoreceptor which exists in two forms that are reversibly interconvertible by light: the Pr form that absorbs maximally in the red region of the spectrum and the Pfr form that absorbs maximally in the far-red region. Photoconversion of Pr to Pfr induces an array of morphogenic responses, whereas reconversion of Pfr to Pr cancels the induction of those responses. Pfr controls the expression of a number of nuclear genes including those encoding the small subunit of ribulose-bisphosphate carboxylase, chlorophyll A/B binding protein, protochlorophyllide reductase, rRNA, etc. It also controls the expression of its own gene(s) in a negative feedback fashion.</text>
</comment>
<comment type="subunit">
    <text>Homodimer.</text>
</comment>
<comment type="PTM">
    <text evidence="1">Contains one covalently linked phytochromobilin chromophore.</text>
</comment>
<comment type="similarity">
    <text evidence="5">Belongs to the phytochrome family.</text>
</comment>
<name>PHYA1_MAIZE</name>
<accession>P19862</accession>
<reference key="1">
    <citation type="journal article" date="1989" name="Gene">
        <title>Structure and expression of a maize phytochrome-encoding gene.</title>
        <authorList>
            <person name="Christensen A.H."/>
            <person name="Quail P.H."/>
        </authorList>
    </citation>
    <scope>NUCLEOTIDE SEQUENCE</scope>
</reference>
<evidence type="ECO:0000250" key="1"/>
<evidence type="ECO:0000255" key="2">
    <source>
        <dbReference type="PROSITE-ProRule" id="PRU00107"/>
    </source>
</evidence>
<evidence type="ECO:0000255" key="3">
    <source>
        <dbReference type="PROSITE-ProRule" id="PRU00140"/>
    </source>
</evidence>
<evidence type="ECO:0000256" key="4">
    <source>
        <dbReference type="SAM" id="MobiDB-lite"/>
    </source>
</evidence>
<evidence type="ECO:0000305" key="5"/>
<keyword id="KW-0157">Chromophore</keyword>
<keyword id="KW-0600">Photoreceptor protein</keyword>
<keyword id="KW-0675">Receptor</keyword>
<keyword id="KW-1185">Reference proteome</keyword>
<keyword id="KW-0677">Repeat</keyword>
<keyword id="KW-0716">Sensory transduction</keyword>
<keyword id="KW-0804">Transcription</keyword>
<keyword id="KW-0805">Transcription regulation</keyword>
<dbReference type="PIR" id="JQ0382">
    <property type="entry name" value="JQ0382"/>
</dbReference>
<dbReference type="SMR" id="P19862"/>
<dbReference type="FunCoup" id="P19862">
    <property type="interactions" value="255"/>
</dbReference>
<dbReference type="STRING" id="4577.P19862"/>
<dbReference type="PaxDb" id="4577-GRMZM2G181028_P01"/>
<dbReference type="EnsemblPlants" id="Zm00001eb216020_T002">
    <property type="protein sequence ID" value="Zm00001eb216020_P002"/>
    <property type="gene ID" value="Zm00001eb216020"/>
</dbReference>
<dbReference type="EnsemblPlants" id="Zm00001eb216020_T003">
    <property type="protein sequence ID" value="Zm00001eb216020_P003"/>
    <property type="gene ID" value="Zm00001eb216020"/>
</dbReference>
<dbReference type="Gramene" id="Zm00001eb216020_T002">
    <property type="protein sequence ID" value="Zm00001eb216020_P002"/>
    <property type="gene ID" value="Zm00001eb216020"/>
</dbReference>
<dbReference type="Gramene" id="Zm00001eb216020_T003">
    <property type="protein sequence ID" value="Zm00001eb216020_P003"/>
    <property type="gene ID" value="Zm00001eb216020"/>
</dbReference>
<dbReference type="MaizeGDB" id="65582"/>
<dbReference type="eggNOG" id="ENOG502QRSA">
    <property type="taxonomic scope" value="Eukaryota"/>
</dbReference>
<dbReference type="HOGENOM" id="CLU_010418_0_0_1"/>
<dbReference type="InParanoid" id="P19862"/>
<dbReference type="OrthoDB" id="2015534at2759"/>
<dbReference type="Proteomes" id="UP000007305">
    <property type="component" value="Chromosome 5"/>
</dbReference>
<dbReference type="ExpressionAtlas" id="P19862">
    <property type="expression patterns" value="baseline and differential"/>
</dbReference>
<dbReference type="GO" id="GO:0005634">
    <property type="term" value="C:nucleus"/>
    <property type="evidence" value="ECO:0000318"/>
    <property type="project" value="GO_Central"/>
</dbReference>
<dbReference type="GO" id="GO:0000155">
    <property type="term" value="F:phosphorelay sensor kinase activity"/>
    <property type="evidence" value="ECO:0007669"/>
    <property type="project" value="InterPro"/>
</dbReference>
<dbReference type="GO" id="GO:0009881">
    <property type="term" value="F:photoreceptor activity"/>
    <property type="evidence" value="ECO:0007669"/>
    <property type="project" value="UniProtKB-KW"/>
</dbReference>
<dbReference type="GO" id="GO:0042803">
    <property type="term" value="F:protein homodimerization activity"/>
    <property type="evidence" value="ECO:0007669"/>
    <property type="project" value="InterPro"/>
</dbReference>
<dbReference type="GO" id="GO:0009584">
    <property type="term" value="P:detection of visible light"/>
    <property type="evidence" value="ECO:0007669"/>
    <property type="project" value="InterPro"/>
</dbReference>
<dbReference type="GO" id="GO:0009585">
    <property type="term" value="P:red, far-red light phototransduction"/>
    <property type="evidence" value="ECO:0007669"/>
    <property type="project" value="InterPro"/>
</dbReference>
<dbReference type="GO" id="GO:0006355">
    <property type="term" value="P:regulation of DNA-templated transcription"/>
    <property type="evidence" value="ECO:0007669"/>
    <property type="project" value="InterPro"/>
</dbReference>
<dbReference type="CDD" id="cd00082">
    <property type="entry name" value="HisKA"/>
    <property type="match status" value="1"/>
</dbReference>
<dbReference type="CDD" id="cd00130">
    <property type="entry name" value="PAS"/>
    <property type="match status" value="2"/>
</dbReference>
<dbReference type="FunFam" id="3.30.450.270:FF:000001">
    <property type="entry name" value="Phytochrome"/>
    <property type="match status" value="1"/>
</dbReference>
<dbReference type="Gene3D" id="3.30.450.270">
    <property type="match status" value="1"/>
</dbReference>
<dbReference type="Gene3D" id="3.30.450.40">
    <property type="match status" value="1"/>
</dbReference>
<dbReference type="Gene3D" id="3.30.565.10">
    <property type="entry name" value="Histidine kinase-like ATPase, C-terminal domain"/>
    <property type="match status" value="1"/>
</dbReference>
<dbReference type="Gene3D" id="3.30.450.20">
    <property type="entry name" value="PAS domain"/>
    <property type="match status" value="3"/>
</dbReference>
<dbReference type="InterPro" id="IPR003018">
    <property type="entry name" value="GAF"/>
</dbReference>
<dbReference type="InterPro" id="IPR029016">
    <property type="entry name" value="GAF-like_dom_sf"/>
</dbReference>
<dbReference type="InterPro" id="IPR036890">
    <property type="entry name" value="HATPase_C_sf"/>
</dbReference>
<dbReference type="InterPro" id="IPR005467">
    <property type="entry name" value="His_kinase_dom"/>
</dbReference>
<dbReference type="InterPro" id="IPR003661">
    <property type="entry name" value="HisK_dim/P_dom"/>
</dbReference>
<dbReference type="InterPro" id="IPR000014">
    <property type="entry name" value="PAS"/>
</dbReference>
<dbReference type="InterPro" id="IPR035965">
    <property type="entry name" value="PAS-like_dom_sf"/>
</dbReference>
<dbReference type="InterPro" id="IPR013654">
    <property type="entry name" value="PAS_2"/>
</dbReference>
<dbReference type="InterPro" id="IPR013767">
    <property type="entry name" value="PAS_fold"/>
</dbReference>
<dbReference type="InterPro" id="IPR016132">
    <property type="entry name" value="Phyto_chromo_attachment"/>
</dbReference>
<dbReference type="InterPro" id="IPR013516">
    <property type="entry name" value="Phyto_chromo_BS"/>
</dbReference>
<dbReference type="InterPro" id="IPR001294">
    <property type="entry name" value="Phytochrome"/>
</dbReference>
<dbReference type="InterPro" id="IPR012129">
    <property type="entry name" value="Phytochrome_A-E"/>
</dbReference>
<dbReference type="InterPro" id="IPR013515">
    <property type="entry name" value="Phytochrome_cen-reg"/>
</dbReference>
<dbReference type="InterPro" id="IPR043150">
    <property type="entry name" value="Phytochrome_PHY_sf"/>
</dbReference>
<dbReference type="NCBIfam" id="TIGR00229">
    <property type="entry name" value="sensory_box"/>
    <property type="match status" value="1"/>
</dbReference>
<dbReference type="PANTHER" id="PTHR47876">
    <property type="entry name" value="OS08G0260000 PROTEIN"/>
    <property type="match status" value="1"/>
</dbReference>
<dbReference type="PANTHER" id="PTHR47876:SF3">
    <property type="entry name" value="PHYTOCHROME 1"/>
    <property type="match status" value="1"/>
</dbReference>
<dbReference type="Pfam" id="PF01590">
    <property type="entry name" value="GAF"/>
    <property type="match status" value="1"/>
</dbReference>
<dbReference type="Pfam" id="PF02518">
    <property type="entry name" value="HATPase_c"/>
    <property type="match status" value="1"/>
</dbReference>
<dbReference type="Pfam" id="PF00512">
    <property type="entry name" value="HisKA"/>
    <property type="match status" value="1"/>
</dbReference>
<dbReference type="Pfam" id="PF00989">
    <property type="entry name" value="PAS"/>
    <property type="match status" value="2"/>
</dbReference>
<dbReference type="Pfam" id="PF08446">
    <property type="entry name" value="PAS_2"/>
    <property type="match status" value="1"/>
</dbReference>
<dbReference type="Pfam" id="PF00360">
    <property type="entry name" value="PHY"/>
    <property type="match status" value="1"/>
</dbReference>
<dbReference type="PIRSF" id="PIRSF000084">
    <property type="entry name" value="Phytochrome"/>
    <property type="match status" value="1"/>
</dbReference>
<dbReference type="PRINTS" id="PR01033">
    <property type="entry name" value="PHYTOCHROME"/>
</dbReference>
<dbReference type="SMART" id="SM00065">
    <property type="entry name" value="GAF"/>
    <property type="match status" value="1"/>
</dbReference>
<dbReference type="SMART" id="SM00387">
    <property type="entry name" value="HATPase_c"/>
    <property type="match status" value="1"/>
</dbReference>
<dbReference type="SMART" id="SM00388">
    <property type="entry name" value="HisKA"/>
    <property type="match status" value="1"/>
</dbReference>
<dbReference type="SMART" id="SM00091">
    <property type="entry name" value="PAS"/>
    <property type="match status" value="2"/>
</dbReference>
<dbReference type="SUPFAM" id="SSF55874">
    <property type="entry name" value="ATPase domain of HSP90 chaperone/DNA topoisomerase II/histidine kinase"/>
    <property type="match status" value="1"/>
</dbReference>
<dbReference type="SUPFAM" id="SSF55781">
    <property type="entry name" value="GAF domain-like"/>
    <property type="match status" value="2"/>
</dbReference>
<dbReference type="SUPFAM" id="SSF55785">
    <property type="entry name" value="PYP-like sensor domain (PAS domain)"/>
    <property type="match status" value="3"/>
</dbReference>
<dbReference type="PROSITE" id="PS50109">
    <property type="entry name" value="HIS_KIN"/>
    <property type="match status" value="1"/>
</dbReference>
<dbReference type="PROSITE" id="PS50112">
    <property type="entry name" value="PAS"/>
    <property type="match status" value="2"/>
</dbReference>
<dbReference type="PROSITE" id="PS00245">
    <property type="entry name" value="PHYTOCHROME_1"/>
    <property type="match status" value="1"/>
</dbReference>
<dbReference type="PROSITE" id="PS50046">
    <property type="entry name" value="PHYTOCHROME_2"/>
    <property type="match status" value="1"/>
</dbReference>
<protein>
    <recommendedName>
        <fullName>Phytochrome A</fullName>
    </recommendedName>
</protein>
<gene>
    <name type="primary">PHYA1</name>
</gene>
<organism>
    <name type="scientific">Zea mays</name>
    <name type="common">Maize</name>
    <dbReference type="NCBI Taxonomy" id="4577"/>
    <lineage>
        <taxon>Eukaryota</taxon>
        <taxon>Viridiplantae</taxon>
        <taxon>Streptophyta</taxon>
        <taxon>Embryophyta</taxon>
        <taxon>Tracheophyta</taxon>
        <taxon>Spermatophyta</taxon>
        <taxon>Magnoliopsida</taxon>
        <taxon>Liliopsida</taxon>
        <taxon>Poales</taxon>
        <taxon>Poaceae</taxon>
        <taxon>PACMAD clade</taxon>
        <taxon>Panicoideae</taxon>
        <taxon>Andropogonodae</taxon>
        <taxon>Andropogoneae</taxon>
        <taxon>Tripsacinae</taxon>
        <taxon>Zea</taxon>
    </lineage>
</organism>
<proteinExistence type="inferred from homology"/>